<comment type="function">
    <text evidence="1">Signal-recognition-particle assembly has a crucial role in targeting secretory proteins to the rough endoplasmic reticulum membrane. It must be involved intimately in the translocation of a wide variety of protein substrates (By similarity).</text>
</comment>
<comment type="subunit">
    <text evidence="1">Fungal signal recognition particle consists of a 7S RNA molecule (scR1) and at least six protein subunits: SRP72, SRP68, SRP54, SEC65, SRP21 and SRP14.</text>
</comment>
<comment type="subcellular location">
    <subcellularLocation>
        <location evidence="1">Cytoplasm</location>
    </subcellularLocation>
</comment>
<comment type="similarity">
    <text evidence="3">Belongs to the SRP19 family.</text>
</comment>
<reference key="1">
    <citation type="journal article" date="2001" name="Nature">
        <title>Genome sequence and gene compaction of the eukaryote parasite Encephalitozoon cuniculi.</title>
        <authorList>
            <person name="Katinka M.D."/>
            <person name="Duprat S."/>
            <person name="Cornillot E."/>
            <person name="Metenier G."/>
            <person name="Thomarat F."/>
            <person name="Prensier G."/>
            <person name="Barbe V."/>
            <person name="Peyretaillade E."/>
            <person name="Brottier P."/>
            <person name="Wincker P."/>
            <person name="Delbac F."/>
            <person name="El Alaoui H."/>
            <person name="Peyret P."/>
            <person name="Saurin W."/>
            <person name="Gouy M."/>
            <person name="Weissenbach J."/>
            <person name="Vivares C.P."/>
        </authorList>
    </citation>
    <scope>NUCLEOTIDE SEQUENCE [LARGE SCALE GENOMIC DNA]</scope>
    <source>
        <strain>GB-M1</strain>
    </source>
</reference>
<accession>Q8SRC3</accession>
<sequence>MESKHFCLYPIYMDSARSLSEGRKYRKEICVQRPRYHEIKNALEKLEIEYTDEPSKKHPRDFFNSGRFRIKKEYGRLFVIEGISQTIAELRSKPGSSEETSREKQSRGKAVHGVVQNGVYVENKLNLVRKKKAKKKK</sequence>
<name>SEC65_ENCCU</name>
<gene>
    <name type="primary">SEC65</name>
    <name type="ordered locus">ECU08_0800</name>
</gene>
<feature type="chain" id="PRO_0000135208" description="Signal recognition particle SEC65 subunit">
    <location>
        <begin position="1"/>
        <end position="137"/>
    </location>
</feature>
<feature type="region of interest" description="Disordered" evidence="2">
    <location>
        <begin position="90"/>
        <end position="115"/>
    </location>
</feature>
<proteinExistence type="inferred from homology"/>
<keyword id="KW-0963">Cytoplasm</keyword>
<keyword id="KW-1185">Reference proteome</keyword>
<keyword id="KW-0687">Ribonucleoprotein</keyword>
<keyword id="KW-0694">RNA-binding</keyword>
<keyword id="KW-0733">Signal recognition particle</keyword>
<protein>
    <recommendedName>
        <fullName>Signal recognition particle SEC65 subunit</fullName>
    </recommendedName>
</protein>
<organism>
    <name type="scientific">Encephalitozoon cuniculi (strain GB-M1)</name>
    <name type="common">Microsporidian parasite</name>
    <dbReference type="NCBI Taxonomy" id="284813"/>
    <lineage>
        <taxon>Eukaryota</taxon>
        <taxon>Fungi</taxon>
        <taxon>Fungi incertae sedis</taxon>
        <taxon>Microsporidia</taxon>
        <taxon>Unikaryonidae</taxon>
        <taxon>Encephalitozoon</taxon>
    </lineage>
</organism>
<dbReference type="EMBL" id="AL590448">
    <property type="protein sequence ID" value="CAD26386.1"/>
    <property type="molecule type" value="Genomic_DNA"/>
</dbReference>
<dbReference type="RefSeq" id="NP_597210.1">
    <property type="nucleotide sequence ID" value="NM_001041819.1"/>
</dbReference>
<dbReference type="SMR" id="Q8SRC3"/>
<dbReference type="STRING" id="284813.Q8SRC3"/>
<dbReference type="GeneID" id="859632"/>
<dbReference type="KEGG" id="ecu:ECU08_0800"/>
<dbReference type="VEuPathDB" id="MicrosporidiaDB:ECU08_0800"/>
<dbReference type="HOGENOM" id="CLU_154721_0_0_1"/>
<dbReference type="InParanoid" id="Q8SRC3"/>
<dbReference type="OMA" id="TVFMPRT"/>
<dbReference type="OrthoDB" id="2190947at2759"/>
<dbReference type="Proteomes" id="UP000000819">
    <property type="component" value="Chromosome VIII"/>
</dbReference>
<dbReference type="GO" id="GO:0005786">
    <property type="term" value="C:signal recognition particle, endoplasmic reticulum targeting"/>
    <property type="evidence" value="ECO:0007669"/>
    <property type="project" value="UniProtKB-KW"/>
</dbReference>
<dbReference type="GO" id="GO:0008312">
    <property type="term" value="F:7S RNA binding"/>
    <property type="evidence" value="ECO:0007669"/>
    <property type="project" value="InterPro"/>
</dbReference>
<dbReference type="GO" id="GO:0006617">
    <property type="term" value="P:SRP-dependent cotranslational protein targeting to membrane, signal sequence recognition"/>
    <property type="evidence" value="ECO:0007669"/>
    <property type="project" value="TreeGrafter"/>
</dbReference>
<dbReference type="Gene3D" id="3.30.56.30">
    <property type="entry name" value="Signal recognition particle, SRP19-like subunit"/>
    <property type="match status" value="1"/>
</dbReference>
<dbReference type="InterPro" id="IPR002778">
    <property type="entry name" value="Signal_recog_particle_SRP19"/>
</dbReference>
<dbReference type="InterPro" id="IPR036521">
    <property type="entry name" value="SRP19-like_sf"/>
</dbReference>
<dbReference type="PANTHER" id="PTHR17453">
    <property type="entry name" value="SIGNAL RECOGNITION PARTICLE 19 KD PROTEIN"/>
    <property type="match status" value="1"/>
</dbReference>
<dbReference type="PANTHER" id="PTHR17453:SF0">
    <property type="entry name" value="SIGNAL RECOGNITION PARTICLE 19 KDA PROTEIN"/>
    <property type="match status" value="1"/>
</dbReference>
<dbReference type="Pfam" id="PF01922">
    <property type="entry name" value="SRP19"/>
    <property type="match status" value="1"/>
</dbReference>
<dbReference type="SUPFAM" id="SSF69695">
    <property type="entry name" value="SRP19"/>
    <property type="match status" value="1"/>
</dbReference>
<evidence type="ECO:0000250" key="1"/>
<evidence type="ECO:0000256" key="2">
    <source>
        <dbReference type="SAM" id="MobiDB-lite"/>
    </source>
</evidence>
<evidence type="ECO:0000305" key="3"/>